<feature type="chain" id="PRO_1000184343" description="ATP synthase subunit c">
    <location>
        <begin position="1"/>
        <end position="79"/>
    </location>
</feature>
<feature type="transmembrane region" description="Helical" evidence="1">
    <location>
        <begin position="11"/>
        <end position="31"/>
    </location>
</feature>
<feature type="transmembrane region" description="Helical" evidence="1">
    <location>
        <begin position="53"/>
        <end position="73"/>
    </location>
</feature>
<feature type="site" description="Reversibly protonated during proton transport" evidence="1">
    <location>
        <position position="61"/>
    </location>
</feature>
<keyword id="KW-0066">ATP synthesis</keyword>
<keyword id="KW-1003">Cell membrane</keyword>
<keyword id="KW-0138">CF(0)</keyword>
<keyword id="KW-0375">Hydrogen ion transport</keyword>
<keyword id="KW-0406">Ion transport</keyword>
<keyword id="KW-0446">Lipid-binding</keyword>
<keyword id="KW-0472">Membrane</keyword>
<keyword id="KW-0812">Transmembrane</keyword>
<keyword id="KW-1133">Transmembrane helix</keyword>
<keyword id="KW-0813">Transport</keyword>
<protein>
    <recommendedName>
        <fullName evidence="1">ATP synthase subunit c</fullName>
    </recommendedName>
    <alternativeName>
        <fullName evidence="1">ATP synthase F(0) sector subunit c</fullName>
    </alternativeName>
    <alternativeName>
        <fullName evidence="1">F-type ATPase subunit c</fullName>
        <shortName evidence="1">F-ATPase subunit c</shortName>
    </alternativeName>
    <alternativeName>
        <fullName evidence="1">Lipid-binding protein</fullName>
    </alternativeName>
</protein>
<gene>
    <name evidence="1" type="primary">atpE</name>
    <name type="ordered locus">BUAPTUC7_003</name>
</gene>
<organism>
    <name type="scientific">Buchnera aphidicola subsp. Acyrthosiphon pisum (strain Tuc7)</name>
    <dbReference type="NCBI Taxonomy" id="561501"/>
    <lineage>
        <taxon>Bacteria</taxon>
        <taxon>Pseudomonadati</taxon>
        <taxon>Pseudomonadota</taxon>
        <taxon>Gammaproteobacteria</taxon>
        <taxon>Enterobacterales</taxon>
        <taxon>Erwiniaceae</taxon>
        <taxon>Buchnera</taxon>
    </lineage>
</organism>
<dbReference type="EMBL" id="CP001158">
    <property type="protein sequence ID" value="ACL29837.1"/>
    <property type="molecule type" value="Genomic_DNA"/>
</dbReference>
<dbReference type="RefSeq" id="WP_009873965.1">
    <property type="nucleotide sequence ID" value="NC_011834.1"/>
</dbReference>
<dbReference type="SMR" id="B8D6S2"/>
<dbReference type="KEGG" id="bau:BUAPTUC7_003"/>
<dbReference type="HOGENOM" id="CLU_148047_1_0_6"/>
<dbReference type="GO" id="GO:0005886">
    <property type="term" value="C:plasma membrane"/>
    <property type="evidence" value="ECO:0007669"/>
    <property type="project" value="UniProtKB-SubCell"/>
</dbReference>
<dbReference type="GO" id="GO:0045259">
    <property type="term" value="C:proton-transporting ATP synthase complex"/>
    <property type="evidence" value="ECO:0007669"/>
    <property type="project" value="UniProtKB-KW"/>
</dbReference>
<dbReference type="GO" id="GO:0033177">
    <property type="term" value="C:proton-transporting two-sector ATPase complex, proton-transporting domain"/>
    <property type="evidence" value="ECO:0007669"/>
    <property type="project" value="InterPro"/>
</dbReference>
<dbReference type="GO" id="GO:0008289">
    <property type="term" value="F:lipid binding"/>
    <property type="evidence" value="ECO:0007669"/>
    <property type="project" value="UniProtKB-KW"/>
</dbReference>
<dbReference type="GO" id="GO:0046933">
    <property type="term" value="F:proton-transporting ATP synthase activity, rotational mechanism"/>
    <property type="evidence" value="ECO:0007669"/>
    <property type="project" value="UniProtKB-UniRule"/>
</dbReference>
<dbReference type="CDD" id="cd18185">
    <property type="entry name" value="ATP-synt_Fo_c_ATPE"/>
    <property type="match status" value="1"/>
</dbReference>
<dbReference type="FunFam" id="1.20.20.10:FF:000002">
    <property type="entry name" value="ATP synthase subunit c"/>
    <property type="match status" value="1"/>
</dbReference>
<dbReference type="Gene3D" id="1.20.20.10">
    <property type="entry name" value="F1F0 ATP synthase subunit C"/>
    <property type="match status" value="1"/>
</dbReference>
<dbReference type="HAMAP" id="MF_01396">
    <property type="entry name" value="ATP_synth_c_bact"/>
    <property type="match status" value="1"/>
</dbReference>
<dbReference type="InterPro" id="IPR005953">
    <property type="entry name" value="ATP_synth_csu_bac/chlpt"/>
</dbReference>
<dbReference type="InterPro" id="IPR000454">
    <property type="entry name" value="ATP_synth_F0_csu"/>
</dbReference>
<dbReference type="InterPro" id="IPR020537">
    <property type="entry name" value="ATP_synth_F0_csu_DDCD_BS"/>
</dbReference>
<dbReference type="InterPro" id="IPR038662">
    <property type="entry name" value="ATP_synth_F0_csu_sf"/>
</dbReference>
<dbReference type="InterPro" id="IPR002379">
    <property type="entry name" value="ATPase_proteolipid_c-like_dom"/>
</dbReference>
<dbReference type="InterPro" id="IPR035921">
    <property type="entry name" value="F/V-ATP_Csub_sf"/>
</dbReference>
<dbReference type="NCBIfam" id="TIGR01260">
    <property type="entry name" value="ATP_synt_c"/>
    <property type="match status" value="1"/>
</dbReference>
<dbReference type="NCBIfam" id="NF005363">
    <property type="entry name" value="PRK06876.1"/>
    <property type="match status" value="1"/>
</dbReference>
<dbReference type="Pfam" id="PF00137">
    <property type="entry name" value="ATP-synt_C"/>
    <property type="match status" value="1"/>
</dbReference>
<dbReference type="PRINTS" id="PR00124">
    <property type="entry name" value="ATPASEC"/>
</dbReference>
<dbReference type="SUPFAM" id="SSF81333">
    <property type="entry name" value="F1F0 ATP synthase subunit C"/>
    <property type="match status" value="1"/>
</dbReference>
<dbReference type="PROSITE" id="PS00605">
    <property type="entry name" value="ATPASE_C"/>
    <property type="match status" value="1"/>
</dbReference>
<accession>B8D6S2</accession>
<proteinExistence type="inferred from homology"/>
<name>ATPL_BUCAT</name>
<comment type="function">
    <text evidence="1">F(1)F(0) ATP synthase produces ATP from ADP in the presence of a proton or sodium gradient. F-type ATPases consist of two structural domains, F(1) containing the extramembraneous catalytic core and F(0) containing the membrane proton channel, linked together by a central stalk and a peripheral stalk. During catalysis, ATP synthesis in the catalytic domain of F(1) is coupled via a rotary mechanism of the central stalk subunits to proton translocation.</text>
</comment>
<comment type="function">
    <text evidence="1">Key component of the F(0) channel; it plays a direct role in translocation across the membrane. A homomeric c-ring of between 10-14 subunits forms the central stalk rotor element with the F(1) delta and epsilon subunits.</text>
</comment>
<comment type="subunit">
    <text evidence="1">F-type ATPases have 2 components, F(1) - the catalytic core - and F(0) - the membrane proton channel. F(1) has five subunits: alpha(3), beta(3), gamma(1), delta(1), epsilon(1). F(0) has three main subunits: a(1), b(2) and c(10-14). The alpha and beta chains form an alternating ring which encloses part of the gamma chain. F(1) is attached to F(0) by a central stalk formed by the gamma and epsilon chains, while a peripheral stalk is formed by the delta and b chains.</text>
</comment>
<comment type="subcellular location">
    <subcellularLocation>
        <location evidence="1">Cell membrane</location>
        <topology evidence="1">Multi-pass membrane protein</topology>
    </subcellularLocation>
</comment>
<comment type="similarity">
    <text evidence="1">Belongs to the ATPase C chain family.</text>
</comment>
<evidence type="ECO:0000255" key="1">
    <source>
        <dbReference type="HAMAP-Rule" id="MF_01396"/>
    </source>
</evidence>
<sequence>MENLNVDMLYIAVAIMVGLASIGAAIGIGILGGKFLEGAARQPDLVPLLRTQFFVVMGLVDAIPMIAVGLGLYMLFAIS</sequence>
<reference key="1">
    <citation type="journal article" date="2009" name="Science">
        <title>The dynamics and time scale of ongoing genomic erosion in symbiotic bacteria.</title>
        <authorList>
            <person name="Moran N.A."/>
            <person name="McLaughlin H.J."/>
            <person name="Sorek R."/>
        </authorList>
    </citation>
    <scope>NUCLEOTIDE SEQUENCE [LARGE SCALE GENOMIC DNA]</scope>
    <source>
        <strain>Tuc7</strain>
    </source>
</reference>